<keyword id="KW-0067">ATP-binding</keyword>
<keyword id="KW-0143">Chaperone</keyword>
<keyword id="KW-0547">Nucleotide-binding</keyword>
<sequence length="617" mass="65872">MAFLQISEPGQSAAPHQHKLAVGIDLGTTNSLVASVRSGEANTLPDMKGNVILPSVVQYQDDKICVGANAYQSAASDPQNTIISVKRLMGRSLKDIQTRYPDLPYQFTESDNGLPVIHTTQGDVNPIQVSAEILKSLSNRAEVTLGGSLEGVVITVPAYFDDAQRAGTKDAATLAGLNVLRLLNEPTAAAIAYGLDSGQEGIIAVYDLGGGTFDISILRLSKGVFEVLATGGDSALGGDDFDHVLSQWIKDQAEITTALSNQEQRELLTLATETKVALSDADSVTVSFKEWSGTITADIFNQLIQSLVKKTLMACRRALKDADISSEDVMEVVMVGGSTRTPIVRRSVGDYFAKTPLTSIDPDQVVAIGAAIQADILVGNKPDTEMLLLDVIPLSLGIETMGGLVEKIIPRNTTIPVAKAQEFTTFKDGQTGMMVHVVQGEREMVEDGRSLARFSLKGIPPMTAGAAHIRVTYQVDADGLLSVTAMEKSTGVQSHIQVKPSYGLSDNEVATMLKDSMTYAKDDMKARALAEQQVEADRVIEGLVVALNNDGDALLSKEEQTVILQAVEALITVRKGTDTQAIEDGIKHADEASQEFAARRMDASIRAALAGQSIDEV</sequence>
<protein>
    <recommendedName>
        <fullName evidence="1">Chaperone protein HscA homolog</fullName>
    </recommendedName>
</protein>
<dbReference type="EMBL" id="FM178379">
    <property type="protein sequence ID" value="CAQ78406.1"/>
    <property type="molecule type" value="Genomic_DNA"/>
</dbReference>
<dbReference type="RefSeq" id="WP_012549526.1">
    <property type="nucleotide sequence ID" value="NC_011312.1"/>
</dbReference>
<dbReference type="SMR" id="B6EGX9"/>
<dbReference type="KEGG" id="vsa:VSAL_I0721"/>
<dbReference type="eggNOG" id="COG0443">
    <property type="taxonomic scope" value="Bacteria"/>
</dbReference>
<dbReference type="HOGENOM" id="CLU_005965_2_1_6"/>
<dbReference type="Proteomes" id="UP000001730">
    <property type="component" value="Chromosome 1"/>
</dbReference>
<dbReference type="GO" id="GO:0005524">
    <property type="term" value="F:ATP binding"/>
    <property type="evidence" value="ECO:0007669"/>
    <property type="project" value="UniProtKB-KW"/>
</dbReference>
<dbReference type="GO" id="GO:0016887">
    <property type="term" value="F:ATP hydrolysis activity"/>
    <property type="evidence" value="ECO:0007669"/>
    <property type="project" value="UniProtKB-UniRule"/>
</dbReference>
<dbReference type="GO" id="GO:0140662">
    <property type="term" value="F:ATP-dependent protein folding chaperone"/>
    <property type="evidence" value="ECO:0007669"/>
    <property type="project" value="InterPro"/>
</dbReference>
<dbReference type="GO" id="GO:0051082">
    <property type="term" value="F:unfolded protein binding"/>
    <property type="evidence" value="ECO:0007669"/>
    <property type="project" value="InterPro"/>
</dbReference>
<dbReference type="GO" id="GO:0016226">
    <property type="term" value="P:iron-sulfur cluster assembly"/>
    <property type="evidence" value="ECO:0007669"/>
    <property type="project" value="InterPro"/>
</dbReference>
<dbReference type="CDD" id="cd10236">
    <property type="entry name" value="ASKHA_NBD_HSP70_HscA"/>
    <property type="match status" value="1"/>
</dbReference>
<dbReference type="FunFam" id="3.30.420.40:FF:000046">
    <property type="entry name" value="Chaperone protein HscA"/>
    <property type="match status" value="1"/>
</dbReference>
<dbReference type="FunFam" id="2.60.34.10:FF:000005">
    <property type="entry name" value="Chaperone protein HscA homolog"/>
    <property type="match status" value="1"/>
</dbReference>
<dbReference type="FunFam" id="3.30.420.40:FF:000020">
    <property type="entry name" value="Chaperone protein HscA homolog"/>
    <property type="match status" value="1"/>
</dbReference>
<dbReference type="Gene3D" id="1.20.1270.10">
    <property type="match status" value="1"/>
</dbReference>
<dbReference type="Gene3D" id="3.30.420.40">
    <property type="match status" value="2"/>
</dbReference>
<dbReference type="Gene3D" id="3.90.640.10">
    <property type="entry name" value="Actin, Chain A, domain 4"/>
    <property type="match status" value="1"/>
</dbReference>
<dbReference type="Gene3D" id="2.60.34.10">
    <property type="entry name" value="Substrate Binding Domain Of DNAk, Chain A, domain 1"/>
    <property type="match status" value="1"/>
</dbReference>
<dbReference type="HAMAP" id="MF_00679">
    <property type="entry name" value="HscA"/>
    <property type="match status" value="1"/>
</dbReference>
<dbReference type="InterPro" id="IPR043129">
    <property type="entry name" value="ATPase_NBD"/>
</dbReference>
<dbReference type="InterPro" id="IPR018181">
    <property type="entry name" value="Heat_shock_70_CS"/>
</dbReference>
<dbReference type="InterPro" id="IPR042039">
    <property type="entry name" value="HscA_NBD"/>
</dbReference>
<dbReference type="InterPro" id="IPR029048">
    <property type="entry name" value="HSP70_C_sf"/>
</dbReference>
<dbReference type="InterPro" id="IPR029047">
    <property type="entry name" value="HSP70_peptide-bd_sf"/>
</dbReference>
<dbReference type="InterPro" id="IPR013126">
    <property type="entry name" value="Hsp_70_fam"/>
</dbReference>
<dbReference type="InterPro" id="IPR010236">
    <property type="entry name" value="ISC_FeS_clus_asmbl_HscA"/>
</dbReference>
<dbReference type="NCBIfam" id="TIGR01991">
    <property type="entry name" value="HscA"/>
    <property type="match status" value="1"/>
</dbReference>
<dbReference type="NCBIfam" id="NF003520">
    <property type="entry name" value="PRK05183.1"/>
    <property type="match status" value="1"/>
</dbReference>
<dbReference type="PANTHER" id="PTHR19375">
    <property type="entry name" value="HEAT SHOCK PROTEIN 70KDA"/>
    <property type="match status" value="1"/>
</dbReference>
<dbReference type="Pfam" id="PF00012">
    <property type="entry name" value="HSP70"/>
    <property type="match status" value="1"/>
</dbReference>
<dbReference type="PRINTS" id="PR00301">
    <property type="entry name" value="HEATSHOCK70"/>
</dbReference>
<dbReference type="SUPFAM" id="SSF53067">
    <property type="entry name" value="Actin-like ATPase domain"/>
    <property type="match status" value="2"/>
</dbReference>
<dbReference type="SUPFAM" id="SSF100934">
    <property type="entry name" value="Heat shock protein 70kD (HSP70), C-terminal subdomain"/>
    <property type="match status" value="1"/>
</dbReference>
<dbReference type="SUPFAM" id="SSF100920">
    <property type="entry name" value="Heat shock protein 70kD (HSP70), peptide-binding domain"/>
    <property type="match status" value="1"/>
</dbReference>
<dbReference type="PROSITE" id="PS00297">
    <property type="entry name" value="HSP70_1"/>
    <property type="match status" value="1"/>
</dbReference>
<dbReference type="PROSITE" id="PS00329">
    <property type="entry name" value="HSP70_2"/>
    <property type="match status" value="1"/>
</dbReference>
<proteinExistence type="inferred from homology"/>
<reference key="1">
    <citation type="journal article" date="2008" name="BMC Genomics">
        <title>The genome sequence of the fish pathogen Aliivibrio salmonicida strain LFI1238 shows extensive evidence of gene decay.</title>
        <authorList>
            <person name="Hjerde E."/>
            <person name="Lorentzen M.S."/>
            <person name="Holden M.T."/>
            <person name="Seeger K."/>
            <person name="Paulsen S."/>
            <person name="Bason N."/>
            <person name="Churcher C."/>
            <person name="Harris D."/>
            <person name="Norbertczak H."/>
            <person name="Quail M.A."/>
            <person name="Sanders S."/>
            <person name="Thurston S."/>
            <person name="Parkhill J."/>
            <person name="Willassen N.P."/>
            <person name="Thomson N.R."/>
        </authorList>
    </citation>
    <scope>NUCLEOTIDE SEQUENCE [LARGE SCALE GENOMIC DNA]</scope>
    <source>
        <strain>LFI1238</strain>
    </source>
</reference>
<organism>
    <name type="scientific">Aliivibrio salmonicida (strain LFI1238)</name>
    <name type="common">Vibrio salmonicida (strain LFI1238)</name>
    <dbReference type="NCBI Taxonomy" id="316275"/>
    <lineage>
        <taxon>Bacteria</taxon>
        <taxon>Pseudomonadati</taxon>
        <taxon>Pseudomonadota</taxon>
        <taxon>Gammaproteobacteria</taxon>
        <taxon>Vibrionales</taxon>
        <taxon>Vibrionaceae</taxon>
        <taxon>Aliivibrio</taxon>
    </lineage>
</organism>
<gene>
    <name evidence="1" type="primary">hscA</name>
    <name type="ordered locus">VSAL_I0721</name>
</gene>
<evidence type="ECO:0000255" key="1">
    <source>
        <dbReference type="HAMAP-Rule" id="MF_00679"/>
    </source>
</evidence>
<comment type="function">
    <text evidence="1">Chaperone involved in the maturation of iron-sulfur cluster-containing proteins. Has a low intrinsic ATPase activity which is markedly stimulated by HscB.</text>
</comment>
<comment type="similarity">
    <text evidence="1">Belongs to the heat shock protein 70 family.</text>
</comment>
<accession>B6EGX9</accession>
<feature type="chain" id="PRO_1000131664" description="Chaperone protein HscA homolog">
    <location>
        <begin position="1"/>
        <end position="617"/>
    </location>
</feature>
<name>HSCA_ALISL</name>